<name>CALM_TRYBG</name>
<proteinExistence type="inferred from homology"/>
<sequence>MADQLSNEQISEFKEAFSLFDKDGDGTITTKELGTVMRSLGQNPTEAELQDMINEVDQDGSGTIDFPEFLTLMARKMQDSDSEEEIKEAFRVFDKDGNGFISAAELRHIMTNLGEKLTDEEVDEMIREADVDGDGQINYEEFVKMMMSK</sequence>
<reference key="1">
    <citation type="journal article" date="1985" name="Proc. Natl. Acad. Sci. U.S.A.">
        <title>Calmodulin genes in trypanosomes are tandemly repeated and produce multiple mRNAs with a common 5' leader sequence.</title>
        <authorList>
            <person name="Tschudi C."/>
            <person name="Young A.S."/>
            <person name="Ruben L."/>
            <person name="Patton C.L."/>
            <person name="Richards F.F."/>
        </authorList>
    </citation>
    <scope>NUCLEOTIDE SEQUENCE [GENOMIC DNA]</scope>
</reference>
<comment type="function">
    <text>Calmodulin mediates the control of a large number of enzymes, ion channels and other proteins by Ca(2+). Among the enzymes to be stimulated by the calmodulin-Ca(2+) complex are a number of protein kinases and phosphatases.</text>
</comment>
<comment type="miscellaneous">
    <text>This protein has four functional calcium-binding sites.</text>
</comment>
<comment type="similarity">
    <text evidence="3">Belongs to the calmodulin family.</text>
</comment>
<evidence type="ECO:0000250" key="1"/>
<evidence type="ECO:0000255" key="2">
    <source>
        <dbReference type="PROSITE-ProRule" id="PRU00448"/>
    </source>
</evidence>
<evidence type="ECO:0000305" key="3"/>
<feature type="initiator methionine" description="Removed" evidence="1">
    <location>
        <position position="1"/>
    </location>
</feature>
<feature type="chain" id="PRO_0000198276" description="Calmodulin">
    <location>
        <begin position="2"/>
        <end position="149"/>
    </location>
</feature>
<feature type="domain" description="EF-hand 1" evidence="2">
    <location>
        <begin position="8"/>
        <end position="43"/>
    </location>
</feature>
<feature type="domain" description="EF-hand 2" evidence="2">
    <location>
        <begin position="44"/>
        <end position="79"/>
    </location>
</feature>
<feature type="domain" description="EF-hand 3" evidence="2">
    <location>
        <begin position="81"/>
        <end position="116"/>
    </location>
</feature>
<feature type="domain" description="EF-hand 4" evidence="2">
    <location>
        <begin position="117"/>
        <end position="149"/>
    </location>
</feature>
<feature type="binding site" evidence="2">
    <location>
        <position position="21"/>
    </location>
    <ligand>
        <name>Ca(2+)</name>
        <dbReference type="ChEBI" id="CHEBI:29108"/>
        <label>1</label>
    </ligand>
</feature>
<feature type="binding site" evidence="2">
    <location>
        <position position="23"/>
    </location>
    <ligand>
        <name>Ca(2+)</name>
        <dbReference type="ChEBI" id="CHEBI:29108"/>
        <label>1</label>
    </ligand>
</feature>
<feature type="binding site" evidence="2">
    <location>
        <position position="25"/>
    </location>
    <ligand>
        <name>Ca(2+)</name>
        <dbReference type="ChEBI" id="CHEBI:29108"/>
        <label>1</label>
    </ligand>
</feature>
<feature type="binding site" evidence="2">
    <location>
        <position position="27"/>
    </location>
    <ligand>
        <name>Ca(2+)</name>
        <dbReference type="ChEBI" id="CHEBI:29108"/>
        <label>1</label>
    </ligand>
</feature>
<feature type="binding site" evidence="2">
    <location>
        <position position="32"/>
    </location>
    <ligand>
        <name>Ca(2+)</name>
        <dbReference type="ChEBI" id="CHEBI:29108"/>
        <label>1</label>
    </ligand>
</feature>
<feature type="binding site" evidence="2">
    <location>
        <position position="57"/>
    </location>
    <ligand>
        <name>Ca(2+)</name>
        <dbReference type="ChEBI" id="CHEBI:29108"/>
        <label>2</label>
    </ligand>
</feature>
<feature type="binding site" evidence="2">
    <location>
        <position position="59"/>
    </location>
    <ligand>
        <name>Ca(2+)</name>
        <dbReference type="ChEBI" id="CHEBI:29108"/>
        <label>2</label>
    </ligand>
</feature>
<feature type="binding site" evidence="2">
    <location>
        <position position="61"/>
    </location>
    <ligand>
        <name>Ca(2+)</name>
        <dbReference type="ChEBI" id="CHEBI:29108"/>
        <label>2</label>
    </ligand>
</feature>
<feature type="binding site" evidence="2">
    <location>
        <position position="63"/>
    </location>
    <ligand>
        <name>Ca(2+)</name>
        <dbReference type="ChEBI" id="CHEBI:29108"/>
        <label>2</label>
    </ligand>
</feature>
<feature type="binding site" evidence="2">
    <location>
        <position position="68"/>
    </location>
    <ligand>
        <name>Ca(2+)</name>
        <dbReference type="ChEBI" id="CHEBI:29108"/>
        <label>2</label>
    </ligand>
</feature>
<feature type="binding site" evidence="2">
    <location>
        <position position="94"/>
    </location>
    <ligand>
        <name>Ca(2+)</name>
        <dbReference type="ChEBI" id="CHEBI:29108"/>
        <label>3</label>
    </ligand>
</feature>
<feature type="binding site" evidence="2">
    <location>
        <position position="96"/>
    </location>
    <ligand>
        <name>Ca(2+)</name>
        <dbReference type="ChEBI" id="CHEBI:29108"/>
        <label>3</label>
    </ligand>
</feature>
<feature type="binding site" evidence="2">
    <location>
        <position position="98"/>
    </location>
    <ligand>
        <name>Ca(2+)</name>
        <dbReference type="ChEBI" id="CHEBI:29108"/>
        <label>3</label>
    </ligand>
</feature>
<feature type="binding site" evidence="2">
    <location>
        <position position="105"/>
    </location>
    <ligand>
        <name>Ca(2+)</name>
        <dbReference type="ChEBI" id="CHEBI:29108"/>
        <label>3</label>
    </ligand>
</feature>
<feature type="binding site" evidence="2">
    <location>
        <position position="130"/>
    </location>
    <ligand>
        <name>Ca(2+)</name>
        <dbReference type="ChEBI" id="CHEBI:29108"/>
        <label>4</label>
    </ligand>
</feature>
<feature type="binding site" evidence="2">
    <location>
        <position position="132"/>
    </location>
    <ligand>
        <name>Ca(2+)</name>
        <dbReference type="ChEBI" id="CHEBI:29108"/>
        <label>4</label>
    </ligand>
</feature>
<feature type="binding site" evidence="2">
    <location>
        <position position="134"/>
    </location>
    <ligand>
        <name>Ca(2+)</name>
        <dbReference type="ChEBI" id="CHEBI:29108"/>
        <label>4</label>
    </ligand>
</feature>
<feature type="binding site" evidence="2">
    <location>
        <position position="136"/>
    </location>
    <ligand>
        <name>Ca(2+)</name>
        <dbReference type="ChEBI" id="CHEBI:29108"/>
        <label>4</label>
    </ligand>
</feature>
<feature type="binding site" evidence="2">
    <location>
        <position position="141"/>
    </location>
    <ligand>
        <name>Ca(2+)</name>
        <dbReference type="ChEBI" id="CHEBI:29108"/>
        <label>4</label>
    </ligand>
</feature>
<feature type="modified residue" description="N6,N6,N6-trimethyllysine" evidence="1">
    <location>
        <position position="116"/>
    </location>
</feature>
<feature type="sequence variant">
    <original>I</original>
    <variation>N</variation>
    <location>
        <position position="101"/>
    </location>
</feature>
<protein>
    <recommendedName>
        <fullName>Calmodulin</fullName>
        <shortName>CaM</shortName>
    </recommendedName>
</protein>
<dbReference type="EMBL" id="K02944">
    <property type="protein sequence ID" value="AAA30174.1"/>
    <property type="molecule type" value="Genomic_DNA"/>
</dbReference>
<dbReference type="EMBL" id="K02944">
    <property type="protein sequence ID" value="AAA30176.1"/>
    <property type="molecule type" value="Genomic_DNA"/>
</dbReference>
<dbReference type="EMBL" id="K02944">
    <property type="protein sequence ID" value="AAA30175.1"/>
    <property type="molecule type" value="Genomic_DNA"/>
</dbReference>
<dbReference type="PIR" id="A03028">
    <property type="entry name" value="MCUTG"/>
</dbReference>
<dbReference type="SMR" id="P69098"/>
<dbReference type="GO" id="GO:0016460">
    <property type="term" value="C:myosin II complex"/>
    <property type="evidence" value="ECO:0007669"/>
    <property type="project" value="TreeGrafter"/>
</dbReference>
<dbReference type="GO" id="GO:0005509">
    <property type="term" value="F:calcium ion binding"/>
    <property type="evidence" value="ECO:0007669"/>
    <property type="project" value="InterPro"/>
</dbReference>
<dbReference type="CDD" id="cd00051">
    <property type="entry name" value="EFh"/>
    <property type="match status" value="2"/>
</dbReference>
<dbReference type="FunFam" id="1.10.238.10:FF:000034">
    <property type="entry name" value="Calmodulin"/>
    <property type="match status" value="1"/>
</dbReference>
<dbReference type="FunFam" id="1.10.238.10:FF:000006">
    <property type="entry name" value="Calmodulin 1"/>
    <property type="match status" value="1"/>
</dbReference>
<dbReference type="Gene3D" id="1.10.238.10">
    <property type="entry name" value="EF-hand"/>
    <property type="match status" value="3"/>
</dbReference>
<dbReference type="InterPro" id="IPR050230">
    <property type="entry name" value="CALM/Myosin/TropC-like"/>
</dbReference>
<dbReference type="InterPro" id="IPR011992">
    <property type="entry name" value="EF-hand-dom_pair"/>
</dbReference>
<dbReference type="InterPro" id="IPR018247">
    <property type="entry name" value="EF_Hand_1_Ca_BS"/>
</dbReference>
<dbReference type="InterPro" id="IPR002048">
    <property type="entry name" value="EF_hand_dom"/>
</dbReference>
<dbReference type="PANTHER" id="PTHR23048:SF0">
    <property type="entry name" value="CALMODULIN LIKE 3"/>
    <property type="match status" value="1"/>
</dbReference>
<dbReference type="PANTHER" id="PTHR23048">
    <property type="entry name" value="MYOSIN LIGHT CHAIN 1, 3"/>
    <property type="match status" value="1"/>
</dbReference>
<dbReference type="Pfam" id="PF13499">
    <property type="entry name" value="EF-hand_7"/>
    <property type="match status" value="2"/>
</dbReference>
<dbReference type="SMART" id="SM00054">
    <property type="entry name" value="EFh"/>
    <property type="match status" value="4"/>
</dbReference>
<dbReference type="SUPFAM" id="SSF47473">
    <property type="entry name" value="EF-hand"/>
    <property type="match status" value="1"/>
</dbReference>
<dbReference type="PROSITE" id="PS00018">
    <property type="entry name" value="EF_HAND_1"/>
    <property type="match status" value="4"/>
</dbReference>
<dbReference type="PROSITE" id="PS50222">
    <property type="entry name" value="EF_HAND_2"/>
    <property type="match status" value="4"/>
</dbReference>
<accession>P69098</accession>
<accession>P04465</accession>
<organism>
    <name type="scientific">Trypanosoma brucei gambiense</name>
    <dbReference type="NCBI Taxonomy" id="31285"/>
    <lineage>
        <taxon>Eukaryota</taxon>
        <taxon>Discoba</taxon>
        <taxon>Euglenozoa</taxon>
        <taxon>Kinetoplastea</taxon>
        <taxon>Metakinetoplastina</taxon>
        <taxon>Trypanosomatida</taxon>
        <taxon>Trypanosomatidae</taxon>
        <taxon>Trypanosoma</taxon>
    </lineage>
</organism>
<keyword id="KW-0106">Calcium</keyword>
<keyword id="KW-0479">Metal-binding</keyword>
<keyword id="KW-0488">Methylation</keyword>
<keyword id="KW-0677">Repeat</keyword>